<reference key="1">
    <citation type="journal article" date="2009" name="Appl. Environ. Microbiol.">
        <title>Genome analysis of the meat starter culture bacterium Staphylococcus carnosus TM300.</title>
        <authorList>
            <person name="Rosenstein R."/>
            <person name="Nerz C."/>
            <person name="Biswas L."/>
            <person name="Resch A."/>
            <person name="Raddatz G."/>
            <person name="Schuster S.C."/>
            <person name="Goetz F."/>
        </authorList>
    </citation>
    <scope>NUCLEOTIDE SEQUENCE [LARGE SCALE GENOMIC DNA]</scope>
    <source>
        <strain>TM300</strain>
    </source>
</reference>
<proteinExistence type="inferred from homology"/>
<evidence type="ECO:0000255" key="1">
    <source>
        <dbReference type="HAMAP-Rule" id="MF_00375"/>
    </source>
</evidence>
<comment type="catalytic activity">
    <reaction evidence="1">
        <text>(S)-4-amino-5-oxopentanoate = 5-aminolevulinate</text>
        <dbReference type="Rhea" id="RHEA:14265"/>
        <dbReference type="ChEBI" id="CHEBI:57501"/>
        <dbReference type="ChEBI" id="CHEBI:356416"/>
        <dbReference type="EC" id="5.4.3.8"/>
    </reaction>
</comment>
<comment type="cofactor">
    <cofactor evidence="1">
        <name>pyridoxal 5'-phosphate</name>
        <dbReference type="ChEBI" id="CHEBI:597326"/>
    </cofactor>
</comment>
<comment type="pathway">
    <text evidence="1">Porphyrin-containing compound metabolism; protoporphyrin-IX biosynthesis; 5-aminolevulinate from L-glutamyl-tRNA(Glu): step 2/2.</text>
</comment>
<comment type="subunit">
    <text evidence="1">Homodimer.</text>
</comment>
<comment type="subcellular location">
    <subcellularLocation>
        <location evidence="1">Cytoplasm</location>
    </subcellularLocation>
</comment>
<comment type="similarity">
    <text evidence="1">Belongs to the class-III pyridoxal-phosphate-dependent aminotransferase family. HemL subfamily.</text>
</comment>
<sequence length="429" mass="46878">MEFTESERLQSLSDEYILGGVNSPSRSYKAVGGGAPVVMKEGKGQYLYDVDGNRYIDYLQAYGPIITGHAHPHITKAIQEQAAKGVLYGTPTELEIKFAKKLREAIPSLKKMRFVNSGTEAVMTTIRVARAYTNRNKIIKFAGSYHGHSDLVLVAAGSGPSQLGSPDSAGVPKSVAQEVITVPFNDIEAYKEAMKHWGNEVAAVLVEPIVGNFGMVEPKPGFLEAVNEITHEYGGLVVYDEVITAFRFHYGAAQDLLNVYPDLTAFGKIVGGGLPIGGYGGRQDIMEQVAPLGPAYQAGTMAGNPLSMKAGIALLEVLEQDGVYEELDRLGKKLEDGLNELIDKHDITATINRVYGSLTLYFTDEKVTHYDQAENADGDAFAKFFKLMLNQGINLAPSKFEAWFLTTEHTDEDIEETLRAADYAFSQMK</sequence>
<protein>
    <recommendedName>
        <fullName evidence="1">Glutamate-1-semialdehyde 2,1-aminomutase 2</fullName>
        <shortName evidence="1">GSA 2</shortName>
        <ecNumber evidence="1">5.4.3.8</ecNumber>
    </recommendedName>
    <alternativeName>
        <fullName evidence="1">Glutamate-1-semialdehyde aminotransferase 2</fullName>
        <shortName evidence="1">GSA-AT 2</shortName>
    </alternativeName>
</protein>
<gene>
    <name evidence="1" type="primary">hemL2</name>
    <name type="ordered locus">Sca_1437</name>
</gene>
<dbReference type="EC" id="5.4.3.8" evidence="1"/>
<dbReference type="EMBL" id="AM295250">
    <property type="protein sequence ID" value="CAL28342.1"/>
    <property type="molecule type" value="Genomic_DNA"/>
</dbReference>
<dbReference type="RefSeq" id="WP_015900682.1">
    <property type="nucleotide sequence ID" value="NC_012121.1"/>
</dbReference>
<dbReference type="SMR" id="B9DMX3"/>
<dbReference type="GeneID" id="93793892"/>
<dbReference type="KEGG" id="sca:SCA_1437"/>
<dbReference type="eggNOG" id="COG0001">
    <property type="taxonomic scope" value="Bacteria"/>
</dbReference>
<dbReference type="HOGENOM" id="CLU_016922_1_5_9"/>
<dbReference type="OrthoDB" id="9807885at2"/>
<dbReference type="BioCyc" id="SCAR396513:SCA_RS07315-MONOMER"/>
<dbReference type="UniPathway" id="UPA00251">
    <property type="reaction ID" value="UER00317"/>
</dbReference>
<dbReference type="Proteomes" id="UP000000444">
    <property type="component" value="Chromosome"/>
</dbReference>
<dbReference type="GO" id="GO:0005737">
    <property type="term" value="C:cytoplasm"/>
    <property type="evidence" value="ECO:0007669"/>
    <property type="project" value="UniProtKB-SubCell"/>
</dbReference>
<dbReference type="GO" id="GO:0042286">
    <property type="term" value="F:glutamate-1-semialdehyde 2,1-aminomutase activity"/>
    <property type="evidence" value="ECO:0007669"/>
    <property type="project" value="UniProtKB-UniRule"/>
</dbReference>
<dbReference type="GO" id="GO:0030170">
    <property type="term" value="F:pyridoxal phosphate binding"/>
    <property type="evidence" value="ECO:0007669"/>
    <property type="project" value="InterPro"/>
</dbReference>
<dbReference type="GO" id="GO:0008483">
    <property type="term" value="F:transaminase activity"/>
    <property type="evidence" value="ECO:0007669"/>
    <property type="project" value="InterPro"/>
</dbReference>
<dbReference type="GO" id="GO:0006782">
    <property type="term" value="P:protoporphyrinogen IX biosynthetic process"/>
    <property type="evidence" value="ECO:0007669"/>
    <property type="project" value="UniProtKB-UniRule"/>
</dbReference>
<dbReference type="CDD" id="cd00610">
    <property type="entry name" value="OAT_like"/>
    <property type="match status" value="1"/>
</dbReference>
<dbReference type="FunFam" id="3.40.640.10:FF:000021">
    <property type="entry name" value="Glutamate-1-semialdehyde 2,1-aminomutase"/>
    <property type="match status" value="1"/>
</dbReference>
<dbReference type="Gene3D" id="3.90.1150.10">
    <property type="entry name" value="Aspartate Aminotransferase, domain 1"/>
    <property type="match status" value="1"/>
</dbReference>
<dbReference type="Gene3D" id="3.40.640.10">
    <property type="entry name" value="Type I PLP-dependent aspartate aminotransferase-like (Major domain)"/>
    <property type="match status" value="1"/>
</dbReference>
<dbReference type="HAMAP" id="MF_00375">
    <property type="entry name" value="HemL_aminotrans_3"/>
    <property type="match status" value="1"/>
</dbReference>
<dbReference type="InterPro" id="IPR004639">
    <property type="entry name" value="4pyrrol_synth_GluAld_NH2Trfase"/>
</dbReference>
<dbReference type="InterPro" id="IPR005814">
    <property type="entry name" value="Aminotrans_3"/>
</dbReference>
<dbReference type="InterPro" id="IPR049704">
    <property type="entry name" value="Aminotrans_3_PPA_site"/>
</dbReference>
<dbReference type="InterPro" id="IPR015424">
    <property type="entry name" value="PyrdxlP-dep_Trfase"/>
</dbReference>
<dbReference type="InterPro" id="IPR015421">
    <property type="entry name" value="PyrdxlP-dep_Trfase_major"/>
</dbReference>
<dbReference type="InterPro" id="IPR015422">
    <property type="entry name" value="PyrdxlP-dep_Trfase_small"/>
</dbReference>
<dbReference type="NCBIfam" id="TIGR00713">
    <property type="entry name" value="hemL"/>
    <property type="match status" value="1"/>
</dbReference>
<dbReference type="NCBIfam" id="NF000818">
    <property type="entry name" value="PRK00062.1"/>
    <property type="match status" value="1"/>
</dbReference>
<dbReference type="NCBIfam" id="NF009055">
    <property type="entry name" value="PRK12389.1"/>
    <property type="match status" value="1"/>
</dbReference>
<dbReference type="PANTHER" id="PTHR43713">
    <property type="entry name" value="GLUTAMATE-1-SEMIALDEHYDE 2,1-AMINOMUTASE"/>
    <property type="match status" value="1"/>
</dbReference>
<dbReference type="PANTHER" id="PTHR43713:SF1">
    <property type="entry name" value="GLUTAMATE-1-SEMIALDEHYDE 2,1-AMINOMUTASE 2"/>
    <property type="match status" value="1"/>
</dbReference>
<dbReference type="Pfam" id="PF00202">
    <property type="entry name" value="Aminotran_3"/>
    <property type="match status" value="1"/>
</dbReference>
<dbReference type="SUPFAM" id="SSF53383">
    <property type="entry name" value="PLP-dependent transferases"/>
    <property type="match status" value="1"/>
</dbReference>
<dbReference type="PROSITE" id="PS00600">
    <property type="entry name" value="AA_TRANSFER_CLASS_3"/>
    <property type="match status" value="1"/>
</dbReference>
<name>GSA2_STACT</name>
<accession>B9DMX3</accession>
<organism>
    <name type="scientific">Staphylococcus carnosus (strain TM300)</name>
    <dbReference type="NCBI Taxonomy" id="396513"/>
    <lineage>
        <taxon>Bacteria</taxon>
        <taxon>Bacillati</taxon>
        <taxon>Bacillota</taxon>
        <taxon>Bacilli</taxon>
        <taxon>Bacillales</taxon>
        <taxon>Staphylococcaceae</taxon>
        <taxon>Staphylococcus</taxon>
    </lineage>
</organism>
<feature type="chain" id="PRO_0000382382" description="Glutamate-1-semialdehyde 2,1-aminomutase 2">
    <location>
        <begin position="1"/>
        <end position="429"/>
    </location>
</feature>
<feature type="modified residue" description="N6-(pyridoxal phosphate)lysine" evidence="1">
    <location>
        <position position="268"/>
    </location>
</feature>
<keyword id="KW-0963">Cytoplasm</keyword>
<keyword id="KW-0413">Isomerase</keyword>
<keyword id="KW-0627">Porphyrin biosynthesis</keyword>
<keyword id="KW-0663">Pyridoxal phosphate</keyword>
<keyword id="KW-1185">Reference proteome</keyword>